<accession>Q59NH8</accession>
<accession>A0A1D8PPE7</accession>
<protein>
    <recommendedName>
        <fullName>Tyrosine-protein phosphatase CDC14</fullName>
        <ecNumber>3.1.3.48</ecNumber>
    </recommendedName>
</protein>
<dbReference type="EC" id="3.1.3.48"/>
<dbReference type="EMBL" id="CP017628">
    <property type="protein sequence ID" value="AOW30013.1"/>
    <property type="molecule type" value="Genomic_DNA"/>
</dbReference>
<dbReference type="RefSeq" id="XP_019330990.1">
    <property type="nucleotide sequence ID" value="XM_019475445.1"/>
</dbReference>
<dbReference type="SMR" id="Q59NH8"/>
<dbReference type="BioGRID" id="1230209">
    <property type="interactions" value="127"/>
</dbReference>
<dbReference type="FunCoup" id="Q59NH8">
    <property type="interactions" value="864"/>
</dbReference>
<dbReference type="STRING" id="237561.Q59NH8"/>
<dbReference type="EnsemblFungi" id="C6_00670W_A-T">
    <property type="protein sequence ID" value="C6_00670W_A-T-p1"/>
    <property type="gene ID" value="C6_00670W_A"/>
</dbReference>
<dbReference type="GeneID" id="3647132"/>
<dbReference type="KEGG" id="cal:CAALFM_C600670WA"/>
<dbReference type="CGD" id="CAL0000180943">
    <property type="gene designation" value="CDC14"/>
</dbReference>
<dbReference type="VEuPathDB" id="FungiDB:C6_00670W_A"/>
<dbReference type="HOGENOM" id="CLU_017787_1_2_1"/>
<dbReference type="InParanoid" id="Q59NH8"/>
<dbReference type="OMA" id="ACMLCCY"/>
<dbReference type="OrthoDB" id="5632at2759"/>
<dbReference type="PRO" id="PR:Q59NH8"/>
<dbReference type="Proteomes" id="UP000000559">
    <property type="component" value="Chromosome 6"/>
</dbReference>
<dbReference type="GO" id="GO:0030428">
    <property type="term" value="C:cell septum"/>
    <property type="evidence" value="ECO:0000314"/>
    <property type="project" value="CGD"/>
</dbReference>
<dbReference type="GO" id="GO:0005935">
    <property type="term" value="C:cellular bud neck"/>
    <property type="evidence" value="ECO:0007669"/>
    <property type="project" value="UniProtKB-SubCell"/>
</dbReference>
<dbReference type="GO" id="GO:0005737">
    <property type="term" value="C:cytoplasm"/>
    <property type="evidence" value="ECO:0000318"/>
    <property type="project" value="GO_Central"/>
</dbReference>
<dbReference type="GO" id="GO:0000776">
    <property type="term" value="C:kinetochore"/>
    <property type="evidence" value="ECO:0007669"/>
    <property type="project" value="EnsemblFungi"/>
</dbReference>
<dbReference type="GO" id="GO:0120105">
    <property type="term" value="C:mitotic actomyosin contractile ring, intermediate layer"/>
    <property type="evidence" value="ECO:0007669"/>
    <property type="project" value="EnsemblFungi"/>
</dbReference>
<dbReference type="GO" id="GO:0072686">
    <property type="term" value="C:mitotic spindle"/>
    <property type="evidence" value="ECO:0000318"/>
    <property type="project" value="GO_Central"/>
</dbReference>
<dbReference type="GO" id="GO:1990023">
    <property type="term" value="C:mitotic spindle midzone"/>
    <property type="evidence" value="ECO:0007669"/>
    <property type="project" value="EnsemblFungi"/>
</dbReference>
<dbReference type="GO" id="GO:0071958">
    <property type="term" value="C:new mitotic spindle pole body"/>
    <property type="evidence" value="ECO:0007669"/>
    <property type="project" value="EnsemblFungi"/>
</dbReference>
<dbReference type="GO" id="GO:0140602">
    <property type="term" value="C:nucleolar peripheral inclusion body"/>
    <property type="evidence" value="ECO:0007669"/>
    <property type="project" value="EnsemblFungi"/>
</dbReference>
<dbReference type="GO" id="GO:0005730">
    <property type="term" value="C:nucleolus"/>
    <property type="evidence" value="ECO:0000316"/>
    <property type="project" value="CGD"/>
</dbReference>
<dbReference type="GO" id="GO:0005654">
    <property type="term" value="C:nucleoplasm"/>
    <property type="evidence" value="ECO:0007669"/>
    <property type="project" value="EnsemblFungi"/>
</dbReference>
<dbReference type="GO" id="GO:0005634">
    <property type="term" value="C:nucleus"/>
    <property type="evidence" value="ECO:0000314"/>
    <property type="project" value="CGD"/>
</dbReference>
<dbReference type="GO" id="GO:0000936">
    <property type="term" value="C:primary cell septum"/>
    <property type="evidence" value="ECO:0000315"/>
    <property type="project" value="CGD"/>
</dbReference>
<dbReference type="GO" id="GO:0030869">
    <property type="term" value="C:RENT complex"/>
    <property type="evidence" value="ECO:0007669"/>
    <property type="project" value="EnsemblFungi"/>
</dbReference>
<dbReference type="GO" id="GO:0000922">
    <property type="term" value="C:spindle pole"/>
    <property type="evidence" value="ECO:0000318"/>
    <property type="project" value="GO_Central"/>
</dbReference>
<dbReference type="GO" id="GO:0005816">
    <property type="term" value="C:spindle pole body"/>
    <property type="evidence" value="ECO:0000314"/>
    <property type="project" value="CGD"/>
</dbReference>
<dbReference type="GO" id="GO:0004722">
    <property type="term" value="F:protein serine/threonine phosphatase activity"/>
    <property type="evidence" value="ECO:0000318"/>
    <property type="project" value="GO_Central"/>
</dbReference>
<dbReference type="GO" id="GO:0004725">
    <property type="term" value="F:protein tyrosine phosphatase activity"/>
    <property type="evidence" value="ECO:0000318"/>
    <property type="project" value="GO_Central"/>
</dbReference>
<dbReference type="GO" id="GO:0008138">
    <property type="term" value="F:protein tyrosine/serine/threonine phosphatase activity"/>
    <property type="evidence" value="ECO:0000314"/>
    <property type="project" value="CGD"/>
</dbReference>
<dbReference type="GO" id="GO:0000422">
    <property type="term" value="P:autophagy of mitochondrion"/>
    <property type="evidence" value="ECO:0007669"/>
    <property type="project" value="EnsemblFungi"/>
</dbReference>
<dbReference type="GO" id="GO:0042149">
    <property type="term" value="P:cellular response to glucose starvation"/>
    <property type="evidence" value="ECO:0000315"/>
    <property type="project" value="CGD"/>
</dbReference>
<dbReference type="GO" id="GO:0071470">
    <property type="term" value="P:cellular response to osmotic stress"/>
    <property type="evidence" value="ECO:0007669"/>
    <property type="project" value="EnsemblFungi"/>
</dbReference>
<dbReference type="GO" id="GO:0006974">
    <property type="term" value="P:DNA damage response"/>
    <property type="evidence" value="ECO:0007669"/>
    <property type="project" value="EnsemblFungi"/>
</dbReference>
<dbReference type="GO" id="GO:0030448">
    <property type="term" value="P:hyphal growth"/>
    <property type="evidence" value="ECO:0000315"/>
    <property type="project" value="CGD"/>
</dbReference>
<dbReference type="GO" id="GO:0036267">
    <property type="term" value="P:invasive filamentous growth"/>
    <property type="evidence" value="ECO:0000315"/>
    <property type="project" value="CGD"/>
</dbReference>
<dbReference type="GO" id="GO:0001403">
    <property type="term" value="P:invasive growth in response to glucose limitation"/>
    <property type="evidence" value="ECO:0000315"/>
    <property type="project" value="CGD"/>
</dbReference>
<dbReference type="GO" id="GO:0140013">
    <property type="term" value="P:meiotic nuclear division"/>
    <property type="evidence" value="ECO:0007669"/>
    <property type="project" value="EnsemblFungi"/>
</dbReference>
<dbReference type="GO" id="GO:0051229">
    <property type="term" value="P:meiotic spindle disassembly"/>
    <property type="evidence" value="ECO:0007669"/>
    <property type="project" value="EnsemblFungi"/>
</dbReference>
<dbReference type="GO" id="GO:0000226">
    <property type="term" value="P:microtubule cytoskeleton organization"/>
    <property type="evidence" value="ECO:0000318"/>
    <property type="project" value="GO_Central"/>
</dbReference>
<dbReference type="GO" id="GO:0000278">
    <property type="term" value="P:mitotic cell cycle"/>
    <property type="evidence" value="ECO:0000316"/>
    <property type="project" value="CGD"/>
</dbReference>
<dbReference type="GO" id="GO:0044878">
    <property type="term" value="P:mitotic cytokinesis checkpoint signaling"/>
    <property type="evidence" value="ECO:0007669"/>
    <property type="project" value="EnsemblFungi"/>
</dbReference>
<dbReference type="GO" id="GO:0016479">
    <property type="term" value="P:negative regulation of transcription by RNA polymerase I"/>
    <property type="evidence" value="ECO:0007669"/>
    <property type="project" value="EnsemblFungi"/>
</dbReference>
<dbReference type="GO" id="GO:2000786">
    <property type="term" value="P:positive regulation of autophagosome assembly"/>
    <property type="evidence" value="ECO:0007669"/>
    <property type="project" value="EnsemblFungi"/>
</dbReference>
<dbReference type="GO" id="GO:0032467">
    <property type="term" value="P:positive regulation of cytokinesis"/>
    <property type="evidence" value="ECO:0000318"/>
    <property type="project" value="GO_Central"/>
</dbReference>
<dbReference type="GO" id="GO:0031536">
    <property type="term" value="P:positive regulation of exit from mitosis"/>
    <property type="evidence" value="ECO:0007669"/>
    <property type="project" value="EnsemblFungi"/>
</dbReference>
<dbReference type="GO" id="GO:1903501">
    <property type="term" value="P:positive regulation of mitotic actomyosin contractile ring assembly"/>
    <property type="evidence" value="ECO:0007669"/>
    <property type="project" value="EnsemblFungi"/>
</dbReference>
<dbReference type="GO" id="GO:0140429">
    <property type="term" value="P:positive regulation of mitotic sister chromatid biorientation"/>
    <property type="evidence" value="ECO:0007669"/>
    <property type="project" value="EnsemblFungi"/>
</dbReference>
<dbReference type="GO" id="GO:1902846">
    <property type="term" value="P:positive regulation of mitotic spindle elongation"/>
    <property type="evidence" value="ECO:0007669"/>
    <property type="project" value="EnsemblFungi"/>
</dbReference>
<dbReference type="GO" id="GO:0031031">
    <property type="term" value="P:positive regulation of septation initiation signaling"/>
    <property type="evidence" value="ECO:0007669"/>
    <property type="project" value="EnsemblFungi"/>
</dbReference>
<dbReference type="GO" id="GO:1902440">
    <property type="term" value="P:protein localization to mitotic spindle pole body"/>
    <property type="evidence" value="ECO:0007669"/>
    <property type="project" value="EnsemblFungi"/>
</dbReference>
<dbReference type="GO" id="GO:0070550">
    <property type="term" value="P:rDNA chromatin condensation"/>
    <property type="evidence" value="ECO:0007669"/>
    <property type="project" value="EnsemblFungi"/>
</dbReference>
<dbReference type="GO" id="GO:1901891">
    <property type="term" value="P:regulation of cell septum assembly"/>
    <property type="evidence" value="ECO:0000315"/>
    <property type="project" value="CGD"/>
</dbReference>
<dbReference type="GO" id="GO:0007096">
    <property type="term" value="P:regulation of exit from mitosis"/>
    <property type="evidence" value="ECO:0000315"/>
    <property type="project" value="CGD"/>
</dbReference>
<dbReference type="GO" id="GO:0000920">
    <property type="term" value="P:septum digestion after cytokinesis"/>
    <property type="evidence" value="ECO:0000315"/>
    <property type="project" value="CGD"/>
</dbReference>
<dbReference type="CDD" id="cd14499">
    <property type="entry name" value="CDC14_C"/>
    <property type="match status" value="1"/>
</dbReference>
<dbReference type="CDD" id="cd17657">
    <property type="entry name" value="CDC14_N"/>
    <property type="match status" value="1"/>
</dbReference>
<dbReference type="FunFam" id="3.90.190.10:FF:000038">
    <property type="entry name" value="Tyrosine-protein phosphatase CDC14"/>
    <property type="match status" value="1"/>
</dbReference>
<dbReference type="Gene3D" id="3.90.190.10">
    <property type="entry name" value="Protein tyrosine phosphatase superfamily"/>
    <property type="match status" value="2"/>
</dbReference>
<dbReference type="InterPro" id="IPR044506">
    <property type="entry name" value="CDC14_C"/>
</dbReference>
<dbReference type="InterPro" id="IPR029260">
    <property type="entry name" value="DSPn"/>
</dbReference>
<dbReference type="InterPro" id="IPR000340">
    <property type="entry name" value="Dual-sp_phosphatase_cat-dom"/>
</dbReference>
<dbReference type="InterPro" id="IPR029021">
    <property type="entry name" value="Prot-tyrosine_phosphatase-like"/>
</dbReference>
<dbReference type="InterPro" id="IPR050561">
    <property type="entry name" value="PTP"/>
</dbReference>
<dbReference type="InterPro" id="IPR016130">
    <property type="entry name" value="Tyr_Pase_AS"/>
</dbReference>
<dbReference type="InterPro" id="IPR003595">
    <property type="entry name" value="Tyr_Pase_cat"/>
</dbReference>
<dbReference type="InterPro" id="IPR000387">
    <property type="entry name" value="Tyr_Pase_dom"/>
</dbReference>
<dbReference type="InterPro" id="IPR020422">
    <property type="entry name" value="TYR_PHOSPHATASE_DUAL_dom"/>
</dbReference>
<dbReference type="PANTHER" id="PTHR23339">
    <property type="entry name" value="TYROSINE SPECIFIC PROTEIN PHOSPHATASE AND DUAL SPECIFICITY PROTEIN PHOSPHATASE"/>
    <property type="match status" value="1"/>
</dbReference>
<dbReference type="Pfam" id="PF00782">
    <property type="entry name" value="DSPc"/>
    <property type="match status" value="1"/>
</dbReference>
<dbReference type="Pfam" id="PF14671">
    <property type="entry name" value="DSPn"/>
    <property type="match status" value="1"/>
</dbReference>
<dbReference type="SMART" id="SM00195">
    <property type="entry name" value="DSPc"/>
    <property type="match status" value="1"/>
</dbReference>
<dbReference type="SMART" id="SM00404">
    <property type="entry name" value="PTPc_motif"/>
    <property type="match status" value="1"/>
</dbReference>
<dbReference type="SUPFAM" id="SSF52799">
    <property type="entry name" value="(Phosphotyrosine protein) phosphatases II"/>
    <property type="match status" value="2"/>
</dbReference>
<dbReference type="PROSITE" id="PS00383">
    <property type="entry name" value="TYR_PHOSPHATASE_1"/>
    <property type="match status" value="1"/>
</dbReference>
<dbReference type="PROSITE" id="PS50056">
    <property type="entry name" value="TYR_PHOSPHATASE_2"/>
    <property type="match status" value="1"/>
</dbReference>
<dbReference type="PROSITE" id="PS50054">
    <property type="entry name" value="TYR_PHOSPHATASE_DUAL"/>
    <property type="match status" value="1"/>
</dbReference>
<comment type="function">
    <text evidence="1 5 6 7">Protein phosphatase which antagonizes mitotic cyclin-dependent kinase CDC28, the inactivation of which is essential for exit from mitosis. To access its substrates, is released from nucleolar sequestration during mitosis. Plays an essential in coordinating the nuclear division cycle with cytokinesis through the cytokinesis checkpoint. Involved in chromosome segregation, where it is required for meiosis I spindle dissambly as well as for establishing two consecutive chromosome segregation phases (By similarity). Plays a role in the expression of hydrolase genes such as CHT3 and ENG1 involved in septum degradation after cytokinesis. Also required for ACE2 localization to the daughter nucleus. Required for invasive and hyphal growth.</text>
</comment>
<comment type="catalytic activity">
    <reaction evidence="3">
        <text>O-phospho-L-tyrosyl-[protein] + H2O = L-tyrosyl-[protein] + phosphate</text>
        <dbReference type="Rhea" id="RHEA:10684"/>
        <dbReference type="Rhea" id="RHEA-COMP:10136"/>
        <dbReference type="Rhea" id="RHEA-COMP:20101"/>
        <dbReference type="ChEBI" id="CHEBI:15377"/>
        <dbReference type="ChEBI" id="CHEBI:43474"/>
        <dbReference type="ChEBI" id="CHEBI:46858"/>
        <dbReference type="ChEBI" id="CHEBI:61978"/>
        <dbReference type="EC" id="3.1.3.48"/>
    </reaction>
</comment>
<comment type="subcellular location">
    <subcellularLocation>
        <location>Nucleus</location>
        <location>Nucleolus</location>
    </subcellularLocation>
    <subcellularLocation>
        <location>Cytoplasm</location>
    </subcellularLocation>
    <subcellularLocation>
        <location>Bud neck</location>
    </subcellularLocation>
    <subcellularLocation>
        <location>Cytoplasm</location>
        <location>Cytoskeleton</location>
        <location>Spindle pole</location>
    </subcellularLocation>
    <subcellularLocation>
        <location>Cell septum</location>
    </subcellularLocation>
    <text>Does not accumulate in the nucleolus in interphase cells. At the G1-S transition, starts to accumulate both in the nucleolus and the and the DAPI-staining region of the nucleus. At the S-G2 transition, starts to concentrate as faint foci on the nuclear periphery. In early mitosis, the CDC14 nuclear signal diminishes concentrates to the spindle pole body (SPB). During cytokinesis, the localization at the SPBs gets fainter and the protein is preferentially found at the septum region. In yeast forms, in which cell separation takes place after cytokinesis, CDC14 is present at the bud neck; in hyphal forms, in which cell separation is inhibited, no CDC14 signal is detected.</text>
</comment>
<comment type="induction">
    <text evidence="6 8">Both during budding and hyphal growth, no detectable levels are observed in G1 cells but, as cells passe through S-phase, begins to accumulate with a peak being reached during mitosis.</text>
</comment>
<comment type="PTM">
    <text evidence="6">Mainly phosphorylated as the cells are passing through mitosis in yeast form cells. Phosphorylation is delayed in hyphal-induced cells, indicating that the timing of cell-cycle progression occurs with different kinetics in hyphae and in yeast cells.</text>
</comment>
<comment type="disruption phenotype">
    <text evidence="6">Leads to defective cell separation and impairs hyphal growth.</text>
</comment>
<comment type="similarity">
    <text evidence="9">Belongs to the protein-tyrosine phosphatase family. Non-receptor class CDC14 subfamily.</text>
</comment>
<gene>
    <name type="primary">CDC14</name>
    <name type="ordered locus">CAALFM_C600670WA</name>
    <name type="ORF">CaO19.11669</name>
    <name type="ORF">CaO19.4192</name>
</gene>
<name>CDC14_CANAL</name>
<sequence length="542" mass="61582">MHSSSVHVPLIEFLKNRIYLGAYDHHKRDTEDLAYFTVEDALPYNAFYMDFGPLNIGHLYRFAVLLHKKLNEDSTQGKGLVIYSSTSPKERANLACLLCCYMILLQNWAPHQVLQPIAQITPPLQAFRDAGYSSADYEITIQDVVYAMWRAKERGMIDLAKFDLDEYEQYERVDQGDFNVISKDFIAFASPQQSKRGGLNEPFQKVLEYFVENNVQLVVRLNSHLYDAKEFTKRNIKHIDMIFDDGTCPTLEYVQKFIGAAECIINKGGKIAVHCKAGLGRTGCLIGAHLIYTHGFTANECIAYMRMIRPGMVVGPQQHWLYLHHDDFRSWRHTMIVDNRPDPLIGNLFPLCSYEDYKQRLKEAKRKERLQLQQQLTSPLADSSVINTPIRRRKVSGALASKIQTVVPIESPGQPRKYFEDSEDIDEVEMVNNSDDENTMQDIIQSSPARYDSVTPKTKDNSDWRVLRSISTNNVSSQQSIHIIKTTTTKTVNETLSSPPGTSPTNVLRVSKARSKNRIASGNSQTSRAHSGGVRKLSGKKH</sequence>
<feature type="chain" id="PRO_0000425253" description="Tyrosine-protein phosphatase CDC14">
    <location>
        <begin position="1"/>
        <end position="542"/>
    </location>
</feature>
<feature type="domain" description="Tyrosine-protein phosphatase" evidence="2">
    <location>
        <begin position="177"/>
        <end position="334"/>
    </location>
</feature>
<feature type="region of interest" description="Disordered" evidence="4">
    <location>
        <begin position="516"/>
        <end position="542"/>
    </location>
</feature>
<feature type="compositionally biased region" description="Polar residues" evidence="4">
    <location>
        <begin position="518"/>
        <end position="529"/>
    </location>
</feature>
<feature type="active site" description="Phosphocysteine intermediate" evidence="2">
    <location>
        <position position="275"/>
    </location>
</feature>
<reference key="1">
    <citation type="journal article" date="2004" name="Proc. Natl. Acad. Sci. U.S.A.">
        <title>The diploid genome sequence of Candida albicans.</title>
        <authorList>
            <person name="Jones T."/>
            <person name="Federspiel N.A."/>
            <person name="Chibana H."/>
            <person name="Dungan J."/>
            <person name="Kalman S."/>
            <person name="Magee B.B."/>
            <person name="Newport G."/>
            <person name="Thorstenson Y.R."/>
            <person name="Agabian N."/>
            <person name="Magee P.T."/>
            <person name="Davis R.W."/>
            <person name="Scherer S."/>
        </authorList>
    </citation>
    <scope>NUCLEOTIDE SEQUENCE [LARGE SCALE GENOMIC DNA]</scope>
    <source>
        <strain>SC5314 / ATCC MYA-2876</strain>
    </source>
</reference>
<reference key="2">
    <citation type="journal article" date="2007" name="Genome Biol.">
        <title>Assembly of the Candida albicans genome into sixteen supercontigs aligned on the eight chromosomes.</title>
        <authorList>
            <person name="van het Hoog M."/>
            <person name="Rast T.J."/>
            <person name="Martchenko M."/>
            <person name="Grindle S."/>
            <person name="Dignard D."/>
            <person name="Hogues H."/>
            <person name="Cuomo C."/>
            <person name="Berriman M."/>
            <person name="Scherer S."/>
            <person name="Magee B.B."/>
            <person name="Whiteway M."/>
            <person name="Chibana H."/>
            <person name="Nantel A."/>
            <person name="Magee P.T."/>
        </authorList>
    </citation>
    <scope>GENOME REANNOTATION</scope>
    <source>
        <strain>SC5314 / ATCC MYA-2876</strain>
    </source>
</reference>
<reference key="3">
    <citation type="journal article" date="2013" name="Genome Biol.">
        <title>Assembly of a phased diploid Candida albicans genome facilitates allele-specific measurements and provides a simple model for repeat and indel structure.</title>
        <authorList>
            <person name="Muzzey D."/>
            <person name="Schwartz K."/>
            <person name="Weissman J.S."/>
            <person name="Sherlock G."/>
        </authorList>
    </citation>
    <scope>NUCLEOTIDE SEQUENCE [LARGE SCALE GENOMIC DNA]</scope>
    <scope>GENOME REANNOTATION</scope>
    <source>
        <strain>SC5314 / ATCC MYA-2876</strain>
    </source>
</reference>
<reference key="4">
    <citation type="journal article" date="2001" name="Yeast">
        <title>A single-copy suppressor of the Saccharomyces cerevisae late-mitotic mutants cdc15 and dbf2 is encoded by the Candida albicans CDC14 gene.</title>
        <authorList>
            <person name="Jimenez J."/>
            <person name="Cid V.J."/>
            <person name="Nombela C."/>
            <person name="Sanchez M."/>
        </authorList>
    </citation>
    <scope>FUNCTION</scope>
</reference>
<reference key="5">
    <citation type="journal article" date="2006" name="J. Cell Sci.">
        <title>The Cdc14p phosphatase affects late cell-cycle events and morphogenesis in Candida albicans.</title>
        <authorList>
            <person name="Clemente-Blanco A."/>
            <person name="Gonzalez-Novo A."/>
            <person name="Machin F."/>
            <person name="Caballero-Lima D."/>
            <person name="Aragon L."/>
            <person name="Sanchez M."/>
            <person name="de Aldana C.R."/>
            <person name="Jimenez J."/>
            <person name="Correa-Bordes J."/>
        </authorList>
    </citation>
    <scope>INDUCTION</scope>
    <scope>PHOSPHORYLATION</scope>
    <scope>DISRUPTION PHENOTYPE</scope>
    <scope>FUNCTION</scope>
    <scope>SUBCELLULAR LOCATION</scope>
</reference>
<reference key="6">
    <citation type="journal article" date="2008" name="Mol. Biol. Cell">
        <title>Sep7 is essential to modify septin ring dynamics and inhibit cell separation during Candida albicans hyphal growth.</title>
        <authorList>
            <person name="Gonzalez-Novo A."/>
            <person name="Correa-Bordes J."/>
            <person name="Labrador L."/>
            <person name="Sanchez M."/>
            <person name="Vazquez de Aldana C.R."/>
            <person name="Jimenez J."/>
        </authorList>
    </citation>
    <scope>FUNCTION</scope>
    <scope>SUBCELLULAR LOCATION</scope>
</reference>
<reference key="7">
    <citation type="journal article" date="2009" name="Mol. Biol. Cell">
        <title>Transcriptional analysis of the Candida albicans cell cycle.</title>
        <authorList>
            <person name="Cote P."/>
            <person name="Hogues H."/>
            <person name="Whiteway M."/>
        </authorList>
    </citation>
    <scope>INDUCTION</scope>
</reference>
<proteinExistence type="evidence at protein level"/>
<organism>
    <name type="scientific">Candida albicans (strain SC5314 / ATCC MYA-2876)</name>
    <name type="common">Yeast</name>
    <dbReference type="NCBI Taxonomy" id="237561"/>
    <lineage>
        <taxon>Eukaryota</taxon>
        <taxon>Fungi</taxon>
        <taxon>Dikarya</taxon>
        <taxon>Ascomycota</taxon>
        <taxon>Saccharomycotina</taxon>
        <taxon>Pichiomycetes</taxon>
        <taxon>Debaryomycetaceae</taxon>
        <taxon>Candida/Lodderomyces clade</taxon>
        <taxon>Candida</taxon>
    </lineage>
</organism>
<evidence type="ECO:0000250" key="1"/>
<evidence type="ECO:0000255" key="2">
    <source>
        <dbReference type="PROSITE-ProRule" id="PRU00160"/>
    </source>
</evidence>
<evidence type="ECO:0000255" key="3">
    <source>
        <dbReference type="PROSITE-ProRule" id="PRU10044"/>
    </source>
</evidence>
<evidence type="ECO:0000256" key="4">
    <source>
        <dbReference type="SAM" id="MobiDB-lite"/>
    </source>
</evidence>
<evidence type="ECO:0000269" key="5">
    <source>
    </source>
</evidence>
<evidence type="ECO:0000269" key="6">
    <source>
    </source>
</evidence>
<evidence type="ECO:0000269" key="7">
    <source>
    </source>
</evidence>
<evidence type="ECO:0000269" key="8">
    <source>
    </source>
</evidence>
<evidence type="ECO:0000305" key="9"/>
<keyword id="KW-0131">Cell cycle</keyword>
<keyword id="KW-0132">Cell division</keyword>
<keyword id="KW-0963">Cytoplasm</keyword>
<keyword id="KW-0206">Cytoskeleton</keyword>
<keyword id="KW-0378">Hydrolase</keyword>
<keyword id="KW-0469">Meiosis</keyword>
<keyword id="KW-0498">Mitosis</keyword>
<keyword id="KW-0539">Nucleus</keyword>
<keyword id="KW-0597">Phosphoprotein</keyword>
<keyword id="KW-0904">Protein phosphatase</keyword>
<keyword id="KW-1185">Reference proteome</keyword>